<evidence type="ECO:0000255" key="1"/>
<evidence type="ECO:0000255" key="2">
    <source>
        <dbReference type="PROSITE-ProRule" id="PRU00581"/>
    </source>
</evidence>
<evidence type="ECO:0000305" key="3"/>
<proteinExistence type="evidence at transcript level"/>
<accession>Q91X49</accession>
<accession>Q3TQ65</accession>
<gene>
    <name type="primary">Mall</name>
    <name type="synonym">Bene</name>
</gene>
<name>MALL_MOUSE</name>
<protein>
    <recommendedName>
        <fullName>MAL-like protein</fullName>
    </recommendedName>
    <alternativeName>
        <fullName>Protein BENE</fullName>
    </alternativeName>
</protein>
<comment type="subcellular location">
    <subcellularLocation>
        <location evidence="3">Membrane</location>
        <topology evidence="3">Multi-pass membrane protein</topology>
    </subcellularLocation>
</comment>
<comment type="similarity">
    <text evidence="3">Belongs to the MAL family.</text>
</comment>
<dbReference type="EMBL" id="AK078971">
    <property type="protein sequence ID" value="BAC37487.1"/>
    <property type="molecule type" value="mRNA"/>
</dbReference>
<dbReference type="EMBL" id="AK163867">
    <property type="protein sequence ID" value="BAE37520.1"/>
    <property type="molecule type" value="mRNA"/>
</dbReference>
<dbReference type="EMBL" id="BC012256">
    <property type="protein sequence ID" value="AAH12256.1"/>
    <property type="molecule type" value="mRNA"/>
</dbReference>
<dbReference type="CCDS" id="CCDS16708.1"/>
<dbReference type="RefSeq" id="NP_663507.1">
    <property type="nucleotide sequence ID" value="NM_145532.4"/>
</dbReference>
<dbReference type="SMR" id="Q91X49"/>
<dbReference type="FunCoup" id="Q91X49">
    <property type="interactions" value="63"/>
</dbReference>
<dbReference type="STRING" id="10090.ENSMUSP00000028856"/>
<dbReference type="PhosphoSitePlus" id="Q91X49"/>
<dbReference type="PaxDb" id="10090-ENSMUSP00000028856"/>
<dbReference type="Antibodypedia" id="54954">
    <property type="antibodies" value="5 antibodies from 5 providers"/>
</dbReference>
<dbReference type="DNASU" id="228576"/>
<dbReference type="Ensembl" id="ENSMUST00000028856.3">
    <property type="protein sequence ID" value="ENSMUSP00000028856.3"/>
    <property type="gene ID" value="ENSMUSG00000027377.3"/>
</dbReference>
<dbReference type="GeneID" id="228576"/>
<dbReference type="KEGG" id="mmu:228576"/>
<dbReference type="UCSC" id="uc008mfx.1">
    <property type="organism name" value="mouse"/>
</dbReference>
<dbReference type="AGR" id="MGI:2385152"/>
<dbReference type="CTD" id="7851"/>
<dbReference type="MGI" id="MGI:2385152">
    <property type="gene designation" value="Mall"/>
</dbReference>
<dbReference type="VEuPathDB" id="HostDB:ENSMUSG00000027377"/>
<dbReference type="eggNOG" id="ENOG502S02H">
    <property type="taxonomic scope" value="Eukaryota"/>
</dbReference>
<dbReference type="GeneTree" id="ENSGT00940000161444"/>
<dbReference type="HOGENOM" id="CLU_112950_1_0_1"/>
<dbReference type="InParanoid" id="Q91X49"/>
<dbReference type="OMA" id="FWVWVLV"/>
<dbReference type="OrthoDB" id="9885621at2759"/>
<dbReference type="PhylomeDB" id="Q91X49"/>
<dbReference type="TreeFam" id="TF316174"/>
<dbReference type="BioGRID-ORCS" id="228576">
    <property type="hits" value="5 hits in 79 CRISPR screens"/>
</dbReference>
<dbReference type="PRO" id="PR:Q91X49"/>
<dbReference type="Proteomes" id="UP000000589">
    <property type="component" value="Chromosome 2"/>
</dbReference>
<dbReference type="RNAct" id="Q91X49">
    <property type="molecule type" value="protein"/>
</dbReference>
<dbReference type="Bgee" id="ENSMUSG00000027377">
    <property type="expression patterns" value="Expressed in esophagus and 96 other cell types or tissues"/>
</dbReference>
<dbReference type="GO" id="GO:0030136">
    <property type="term" value="C:clathrin-coated vesicle"/>
    <property type="evidence" value="ECO:0000250"/>
    <property type="project" value="HGNC-UCL"/>
</dbReference>
<dbReference type="GO" id="GO:0031410">
    <property type="term" value="C:cytoplasmic vesicle"/>
    <property type="evidence" value="ECO:0000250"/>
    <property type="project" value="HGNC-UCL"/>
</dbReference>
<dbReference type="GO" id="GO:0000139">
    <property type="term" value="C:Golgi membrane"/>
    <property type="evidence" value="ECO:0000250"/>
    <property type="project" value="HGNC-UCL"/>
</dbReference>
<dbReference type="GO" id="GO:0045121">
    <property type="term" value="C:membrane raft"/>
    <property type="evidence" value="ECO:0000250"/>
    <property type="project" value="HGNC-UCL"/>
</dbReference>
<dbReference type="GO" id="GO:0005886">
    <property type="term" value="C:plasma membrane"/>
    <property type="evidence" value="ECO:0000250"/>
    <property type="project" value="HGNC-UCL"/>
</dbReference>
<dbReference type="InterPro" id="IPR013295">
    <property type="entry name" value="MAL"/>
</dbReference>
<dbReference type="InterPro" id="IPR008253">
    <property type="entry name" value="Marvel"/>
</dbReference>
<dbReference type="InterPro" id="IPR050578">
    <property type="entry name" value="MARVEL-CKLF_proteins"/>
</dbReference>
<dbReference type="PANTHER" id="PTHR22776:SF24">
    <property type="entry name" value="MAL-LIKE PROTEIN"/>
    <property type="match status" value="1"/>
</dbReference>
<dbReference type="PANTHER" id="PTHR22776">
    <property type="entry name" value="MARVEL-CONTAINING POTENTIAL LIPID RAFT-ASSOCIATED PROTEIN"/>
    <property type="match status" value="1"/>
</dbReference>
<dbReference type="Pfam" id="PF01284">
    <property type="entry name" value="MARVEL"/>
    <property type="match status" value="1"/>
</dbReference>
<dbReference type="PRINTS" id="PR01884">
    <property type="entry name" value="MALPROTEIN"/>
</dbReference>
<dbReference type="PROSITE" id="PS51225">
    <property type="entry name" value="MARVEL"/>
    <property type="match status" value="1"/>
</dbReference>
<organism>
    <name type="scientific">Mus musculus</name>
    <name type="common">Mouse</name>
    <dbReference type="NCBI Taxonomy" id="10090"/>
    <lineage>
        <taxon>Eukaryota</taxon>
        <taxon>Metazoa</taxon>
        <taxon>Chordata</taxon>
        <taxon>Craniata</taxon>
        <taxon>Vertebrata</taxon>
        <taxon>Euteleostomi</taxon>
        <taxon>Mammalia</taxon>
        <taxon>Eutheria</taxon>
        <taxon>Euarchontoglires</taxon>
        <taxon>Glires</taxon>
        <taxon>Rodentia</taxon>
        <taxon>Myomorpha</taxon>
        <taxon>Muroidea</taxon>
        <taxon>Muridae</taxon>
        <taxon>Murinae</taxon>
        <taxon>Mus</taxon>
        <taxon>Mus</taxon>
    </lineage>
</organism>
<reference key="1">
    <citation type="journal article" date="2005" name="Science">
        <title>The transcriptional landscape of the mammalian genome.</title>
        <authorList>
            <person name="Carninci P."/>
            <person name="Kasukawa T."/>
            <person name="Katayama S."/>
            <person name="Gough J."/>
            <person name="Frith M.C."/>
            <person name="Maeda N."/>
            <person name="Oyama R."/>
            <person name="Ravasi T."/>
            <person name="Lenhard B."/>
            <person name="Wells C."/>
            <person name="Kodzius R."/>
            <person name="Shimokawa K."/>
            <person name="Bajic V.B."/>
            <person name="Brenner S.E."/>
            <person name="Batalov S."/>
            <person name="Forrest A.R."/>
            <person name="Zavolan M."/>
            <person name="Davis M.J."/>
            <person name="Wilming L.G."/>
            <person name="Aidinis V."/>
            <person name="Allen J.E."/>
            <person name="Ambesi-Impiombato A."/>
            <person name="Apweiler R."/>
            <person name="Aturaliya R.N."/>
            <person name="Bailey T.L."/>
            <person name="Bansal M."/>
            <person name="Baxter L."/>
            <person name="Beisel K.W."/>
            <person name="Bersano T."/>
            <person name="Bono H."/>
            <person name="Chalk A.M."/>
            <person name="Chiu K.P."/>
            <person name="Choudhary V."/>
            <person name="Christoffels A."/>
            <person name="Clutterbuck D.R."/>
            <person name="Crowe M.L."/>
            <person name="Dalla E."/>
            <person name="Dalrymple B.P."/>
            <person name="de Bono B."/>
            <person name="Della Gatta G."/>
            <person name="di Bernardo D."/>
            <person name="Down T."/>
            <person name="Engstrom P."/>
            <person name="Fagiolini M."/>
            <person name="Faulkner G."/>
            <person name="Fletcher C.F."/>
            <person name="Fukushima T."/>
            <person name="Furuno M."/>
            <person name="Futaki S."/>
            <person name="Gariboldi M."/>
            <person name="Georgii-Hemming P."/>
            <person name="Gingeras T.R."/>
            <person name="Gojobori T."/>
            <person name="Green R.E."/>
            <person name="Gustincich S."/>
            <person name="Harbers M."/>
            <person name="Hayashi Y."/>
            <person name="Hensch T.K."/>
            <person name="Hirokawa N."/>
            <person name="Hill D."/>
            <person name="Huminiecki L."/>
            <person name="Iacono M."/>
            <person name="Ikeo K."/>
            <person name="Iwama A."/>
            <person name="Ishikawa T."/>
            <person name="Jakt M."/>
            <person name="Kanapin A."/>
            <person name="Katoh M."/>
            <person name="Kawasawa Y."/>
            <person name="Kelso J."/>
            <person name="Kitamura H."/>
            <person name="Kitano H."/>
            <person name="Kollias G."/>
            <person name="Krishnan S.P."/>
            <person name="Kruger A."/>
            <person name="Kummerfeld S.K."/>
            <person name="Kurochkin I.V."/>
            <person name="Lareau L.F."/>
            <person name="Lazarevic D."/>
            <person name="Lipovich L."/>
            <person name="Liu J."/>
            <person name="Liuni S."/>
            <person name="McWilliam S."/>
            <person name="Madan Babu M."/>
            <person name="Madera M."/>
            <person name="Marchionni L."/>
            <person name="Matsuda H."/>
            <person name="Matsuzawa S."/>
            <person name="Miki H."/>
            <person name="Mignone F."/>
            <person name="Miyake S."/>
            <person name="Morris K."/>
            <person name="Mottagui-Tabar S."/>
            <person name="Mulder N."/>
            <person name="Nakano N."/>
            <person name="Nakauchi H."/>
            <person name="Ng P."/>
            <person name="Nilsson R."/>
            <person name="Nishiguchi S."/>
            <person name="Nishikawa S."/>
            <person name="Nori F."/>
            <person name="Ohara O."/>
            <person name="Okazaki Y."/>
            <person name="Orlando V."/>
            <person name="Pang K.C."/>
            <person name="Pavan W.J."/>
            <person name="Pavesi G."/>
            <person name="Pesole G."/>
            <person name="Petrovsky N."/>
            <person name="Piazza S."/>
            <person name="Reed J."/>
            <person name="Reid J.F."/>
            <person name="Ring B.Z."/>
            <person name="Ringwald M."/>
            <person name="Rost B."/>
            <person name="Ruan Y."/>
            <person name="Salzberg S.L."/>
            <person name="Sandelin A."/>
            <person name="Schneider C."/>
            <person name="Schoenbach C."/>
            <person name="Sekiguchi K."/>
            <person name="Semple C.A."/>
            <person name="Seno S."/>
            <person name="Sessa L."/>
            <person name="Sheng Y."/>
            <person name="Shibata Y."/>
            <person name="Shimada H."/>
            <person name="Shimada K."/>
            <person name="Silva D."/>
            <person name="Sinclair B."/>
            <person name="Sperling S."/>
            <person name="Stupka E."/>
            <person name="Sugiura K."/>
            <person name="Sultana R."/>
            <person name="Takenaka Y."/>
            <person name="Taki K."/>
            <person name="Tammoja K."/>
            <person name="Tan S.L."/>
            <person name="Tang S."/>
            <person name="Taylor M.S."/>
            <person name="Tegner J."/>
            <person name="Teichmann S.A."/>
            <person name="Ueda H.R."/>
            <person name="van Nimwegen E."/>
            <person name="Verardo R."/>
            <person name="Wei C.L."/>
            <person name="Yagi K."/>
            <person name="Yamanishi H."/>
            <person name="Zabarovsky E."/>
            <person name="Zhu S."/>
            <person name="Zimmer A."/>
            <person name="Hide W."/>
            <person name="Bult C."/>
            <person name="Grimmond S.M."/>
            <person name="Teasdale R.D."/>
            <person name="Liu E.T."/>
            <person name="Brusic V."/>
            <person name="Quackenbush J."/>
            <person name="Wahlestedt C."/>
            <person name="Mattick J.S."/>
            <person name="Hume D.A."/>
            <person name="Kai C."/>
            <person name="Sasaki D."/>
            <person name="Tomaru Y."/>
            <person name="Fukuda S."/>
            <person name="Kanamori-Katayama M."/>
            <person name="Suzuki M."/>
            <person name="Aoki J."/>
            <person name="Arakawa T."/>
            <person name="Iida J."/>
            <person name="Imamura K."/>
            <person name="Itoh M."/>
            <person name="Kato T."/>
            <person name="Kawaji H."/>
            <person name="Kawagashira N."/>
            <person name="Kawashima T."/>
            <person name="Kojima M."/>
            <person name="Kondo S."/>
            <person name="Konno H."/>
            <person name="Nakano K."/>
            <person name="Ninomiya N."/>
            <person name="Nishio T."/>
            <person name="Okada M."/>
            <person name="Plessy C."/>
            <person name="Shibata K."/>
            <person name="Shiraki T."/>
            <person name="Suzuki S."/>
            <person name="Tagami M."/>
            <person name="Waki K."/>
            <person name="Watahiki A."/>
            <person name="Okamura-Oho Y."/>
            <person name="Suzuki H."/>
            <person name="Kawai J."/>
            <person name="Hayashizaki Y."/>
        </authorList>
    </citation>
    <scope>NUCLEOTIDE SEQUENCE [LARGE SCALE MRNA]</scope>
    <source>
        <strain>C57BL/6J</strain>
        <tissue>Cecum</tissue>
        <tissue>Head</tissue>
    </source>
</reference>
<reference key="2">
    <citation type="journal article" date="2004" name="Genome Res.">
        <title>The status, quality, and expansion of the NIH full-length cDNA project: the Mammalian Gene Collection (MGC).</title>
        <authorList>
            <consortium name="The MGC Project Team"/>
        </authorList>
    </citation>
    <scope>NUCLEOTIDE SEQUENCE [LARGE SCALE MRNA]</scope>
    <source>
        <tissue>Colon</tissue>
    </source>
</reference>
<feature type="chain" id="PRO_0000156812" description="MAL-like protein">
    <location>
        <begin position="1"/>
        <end position="154"/>
    </location>
</feature>
<feature type="transmembrane region" description="Helical" evidence="1">
    <location>
        <begin position="24"/>
        <end position="44"/>
    </location>
</feature>
<feature type="transmembrane region" description="Helical" evidence="1">
    <location>
        <begin position="61"/>
        <end position="81"/>
    </location>
</feature>
<feature type="transmembrane region" description="Helical" evidence="1">
    <location>
        <begin position="99"/>
        <end position="119"/>
    </location>
</feature>
<feature type="transmembrane region" description="Helical" evidence="1">
    <location>
        <begin position="131"/>
        <end position="151"/>
    </location>
</feature>
<feature type="domain" description="MARVEL" evidence="2">
    <location>
        <begin position="24"/>
        <end position="154"/>
    </location>
</feature>
<keyword id="KW-0472">Membrane</keyword>
<keyword id="KW-1185">Reference proteome</keyword>
<keyword id="KW-0812">Transmembrane</keyword>
<keyword id="KW-1133">Transmembrane helix</keyword>
<sequence>MASRDTPPATSYAPPDVPSGVAALFLTIPFAFFLPELVFGFWVWTLVAATHVAYPLLQGWVLYVSLTSFLISLMFLMSYLFGFYKRFESWRVLDSLYHGTTGILYMSASVLQAYATIISEGHNLSHYYINVAASFFAFLTTLLYILHAFSIYYH</sequence>